<organism>
    <name type="scientific">Nitrosospira multiformis (strain ATCC 25196 / NCIMB 11849 / C 71)</name>
    <dbReference type="NCBI Taxonomy" id="323848"/>
    <lineage>
        <taxon>Bacteria</taxon>
        <taxon>Pseudomonadati</taxon>
        <taxon>Pseudomonadota</taxon>
        <taxon>Betaproteobacteria</taxon>
        <taxon>Nitrosomonadales</taxon>
        <taxon>Nitrosomonadaceae</taxon>
        <taxon>Nitrosospira</taxon>
    </lineage>
</organism>
<evidence type="ECO:0000255" key="1">
    <source>
        <dbReference type="HAMAP-Rule" id="MF_01151"/>
    </source>
</evidence>
<evidence type="ECO:0000256" key="2">
    <source>
        <dbReference type="SAM" id="MobiDB-lite"/>
    </source>
</evidence>
<dbReference type="EMBL" id="CP000103">
    <property type="protein sequence ID" value="ABB75532.1"/>
    <property type="molecule type" value="Genomic_DNA"/>
</dbReference>
<dbReference type="RefSeq" id="WP_011381538.1">
    <property type="nucleotide sequence ID" value="NC_007614.1"/>
</dbReference>
<dbReference type="SMR" id="Q2Y6T9"/>
<dbReference type="STRING" id="323848.Nmul_A2240"/>
<dbReference type="KEGG" id="nmu:Nmul_A2240"/>
<dbReference type="eggNOG" id="COG0576">
    <property type="taxonomic scope" value="Bacteria"/>
</dbReference>
<dbReference type="HOGENOM" id="CLU_057217_6_2_4"/>
<dbReference type="OrthoDB" id="9789811at2"/>
<dbReference type="Proteomes" id="UP000002718">
    <property type="component" value="Chromosome"/>
</dbReference>
<dbReference type="GO" id="GO:0005829">
    <property type="term" value="C:cytosol"/>
    <property type="evidence" value="ECO:0007669"/>
    <property type="project" value="TreeGrafter"/>
</dbReference>
<dbReference type="GO" id="GO:0000774">
    <property type="term" value="F:adenyl-nucleotide exchange factor activity"/>
    <property type="evidence" value="ECO:0007669"/>
    <property type="project" value="InterPro"/>
</dbReference>
<dbReference type="GO" id="GO:0042803">
    <property type="term" value="F:protein homodimerization activity"/>
    <property type="evidence" value="ECO:0007669"/>
    <property type="project" value="InterPro"/>
</dbReference>
<dbReference type="GO" id="GO:0051087">
    <property type="term" value="F:protein-folding chaperone binding"/>
    <property type="evidence" value="ECO:0007669"/>
    <property type="project" value="InterPro"/>
</dbReference>
<dbReference type="GO" id="GO:0051082">
    <property type="term" value="F:unfolded protein binding"/>
    <property type="evidence" value="ECO:0007669"/>
    <property type="project" value="TreeGrafter"/>
</dbReference>
<dbReference type="GO" id="GO:0006457">
    <property type="term" value="P:protein folding"/>
    <property type="evidence" value="ECO:0007669"/>
    <property type="project" value="InterPro"/>
</dbReference>
<dbReference type="CDD" id="cd00446">
    <property type="entry name" value="GrpE"/>
    <property type="match status" value="1"/>
</dbReference>
<dbReference type="FunFam" id="2.30.22.10:FF:000001">
    <property type="entry name" value="Protein GrpE"/>
    <property type="match status" value="1"/>
</dbReference>
<dbReference type="Gene3D" id="3.90.20.20">
    <property type="match status" value="1"/>
</dbReference>
<dbReference type="Gene3D" id="2.30.22.10">
    <property type="entry name" value="Head domain of nucleotide exchange factor GrpE"/>
    <property type="match status" value="1"/>
</dbReference>
<dbReference type="HAMAP" id="MF_01151">
    <property type="entry name" value="GrpE"/>
    <property type="match status" value="1"/>
</dbReference>
<dbReference type="InterPro" id="IPR000740">
    <property type="entry name" value="GrpE"/>
</dbReference>
<dbReference type="InterPro" id="IPR013805">
    <property type="entry name" value="GrpE_coiled_coil"/>
</dbReference>
<dbReference type="InterPro" id="IPR009012">
    <property type="entry name" value="GrpE_head"/>
</dbReference>
<dbReference type="NCBIfam" id="NF010737">
    <property type="entry name" value="PRK14139.1"/>
    <property type="match status" value="1"/>
</dbReference>
<dbReference type="NCBIfam" id="NF010738">
    <property type="entry name" value="PRK14140.1"/>
    <property type="match status" value="1"/>
</dbReference>
<dbReference type="NCBIfam" id="NF010748">
    <property type="entry name" value="PRK14150.1"/>
    <property type="match status" value="1"/>
</dbReference>
<dbReference type="PANTHER" id="PTHR21237">
    <property type="entry name" value="GRPE PROTEIN"/>
    <property type="match status" value="1"/>
</dbReference>
<dbReference type="PANTHER" id="PTHR21237:SF23">
    <property type="entry name" value="GRPE PROTEIN HOMOLOG, MITOCHONDRIAL"/>
    <property type="match status" value="1"/>
</dbReference>
<dbReference type="Pfam" id="PF01025">
    <property type="entry name" value="GrpE"/>
    <property type="match status" value="1"/>
</dbReference>
<dbReference type="PRINTS" id="PR00773">
    <property type="entry name" value="GRPEPROTEIN"/>
</dbReference>
<dbReference type="SUPFAM" id="SSF58014">
    <property type="entry name" value="Coiled-coil domain of nucleotide exchange factor GrpE"/>
    <property type="match status" value="1"/>
</dbReference>
<dbReference type="SUPFAM" id="SSF51064">
    <property type="entry name" value="Head domain of nucleotide exchange factor GrpE"/>
    <property type="match status" value="1"/>
</dbReference>
<dbReference type="PROSITE" id="PS01071">
    <property type="entry name" value="GRPE"/>
    <property type="match status" value="1"/>
</dbReference>
<reference key="1">
    <citation type="submission" date="2005-08" db="EMBL/GenBank/DDBJ databases">
        <title>Complete sequence of chromosome 1 of Nitrosospira multiformis ATCC 25196.</title>
        <authorList>
            <person name="Copeland A."/>
            <person name="Lucas S."/>
            <person name="Lapidus A."/>
            <person name="Barry K."/>
            <person name="Detter J.C."/>
            <person name="Glavina T."/>
            <person name="Hammon N."/>
            <person name="Israni S."/>
            <person name="Pitluck S."/>
            <person name="Chain P."/>
            <person name="Malfatti S."/>
            <person name="Shin M."/>
            <person name="Vergez L."/>
            <person name="Schmutz J."/>
            <person name="Larimer F."/>
            <person name="Land M."/>
            <person name="Hauser L."/>
            <person name="Kyrpides N."/>
            <person name="Lykidis A."/>
            <person name="Richardson P."/>
        </authorList>
    </citation>
    <scope>NUCLEOTIDE SEQUENCE [LARGE SCALE GENOMIC DNA]</scope>
    <source>
        <strain>ATCC 25196 / NCIMB 11849 / C 71</strain>
    </source>
</reference>
<sequence>MTEENRPQPDQPELTVTSESSVQETGENKARTPEQEGEAMPSLEQLLKKAELDAAEHYDAWLRAKAEGENIRKRAQMDVTNAHKYAIENFSTELLSVMDSLEAALAVENATVENFKSGMELTLKQLTATFAKFNIKQLSPQGEKFDPHLHQAMCMVESELPHNTVVQVMQKGYVLNDRVIRPALVSVSKGKES</sequence>
<protein>
    <recommendedName>
        <fullName evidence="1">Protein GrpE</fullName>
    </recommendedName>
    <alternativeName>
        <fullName evidence="1">HSP-70 cofactor</fullName>
    </alternativeName>
</protein>
<accession>Q2Y6T9</accession>
<feature type="chain" id="PRO_1000073066" description="Protein GrpE">
    <location>
        <begin position="1"/>
        <end position="193"/>
    </location>
</feature>
<feature type="region of interest" description="Disordered" evidence="2">
    <location>
        <begin position="1"/>
        <end position="40"/>
    </location>
</feature>
<feature type="compositionally biased region" description="Polar residues" evidence="2">
    <location>
        <begin position="14"/>
        <end position="25"/>
    </location>
</feature>
<keyword id="KW-0143">Chaperone</keyword>
<keyword id="KW-0963">Cytoplasm</keyword>
<keyword id="KW-1185">Reference proteome</keyword>
<keyword id="KW-0346">Stress response</keyword>
<proteinExistence type="inferred from homology"/>
<comment type="function">
    <text evidence="1">Participates actively in the response to hyperosmotic and heat shock by preventing the aggregation of stress-denatured proteins, in association with DnaK and GrpE. It is the nucleotide exchange factor for DnaK and may function as a thermosensor. Unfolded proteins bind initially to DnaJ; upon interaction with the DnaJ-bound protein, DnaK hydrolyzes its bound ATP, resulting in the formation of a stable complex. GrpE releases ADP from DnaK; ATP binding to DnaK triggers the release of the substrate protein, thus completing the reaction cycle. Several rounds of ATP-dependent interactions between DnaJ, DnaK and GrpE are required for fully efficient folding.</text>
</comment>
<comment type="subunit">
    <text evidence="1">Homodimer.</text>
</comment>
<comment type="subcellular location">
    <subcellularLocation>
        <location evidence="1">Cytoplasm</location>
    </subcellularLocation>
</comment>
<comment type="similarity">
    <text evidence="1">Belongs to the GrpE family.</text>
</comment>
<gene>
    <name evidence="1" type="primary">grpE</name>
    <name type="ordered locus">Nmul_A2240</name>
</gene>
<name>GRPE_NITMU</name>